<feature type="chain" id="PRO_1000214576" description="Large ribosomal subunit protein uL4">
    <location>
        <begin position="1"/>
        <end position="201"/>
    </location>
</feature>
<feature type="region of interest" description="Disordered" evidence="2">
    <location>
        <begin position="44"/>
        <end position="73"/>
    </location>
</feature>
<feature type="compositionally biased region" description="Basic residues" evidence="2">
    <location>
        <begin position="55"/>
        <end position="66"/>
    </location>
</feature>
<dbReference type="EMBL" id="CP001277">
    <property type="protein sequence ID" value="ACQ68460.1"/>
    <property type="molecule type" value="Genomic_DNA"/>
</dbReference>
<dbReference type="RefSeq" id="WP_015874224.1">
    <property type="nucleotide sequence ID" value="NC_012751.1"/>
</dbReference>
<dbReference type="SMR" id="C4K7B7"/>
<dbReference type="STRING" id="572265.HDEF_1865"/>
<dbReference type="GeneID" id="66261450"/>
<dbReference type="KEGG" id="hde:HDEF_1865"/>
<dbReference type="eggNOG" id="COG0088">
    <property type="taxonomic scope" value="Bacteria"/>
</dbReference>
<dbReference type="HOGENOM" id="CLU_041575_5_2_6"/>
<dbReference type="Proteomes" id="UP000002334">
    <property type="component" value="Chromosome"/>
</dbReference>
<dbReference type="GO" id="GO:1990904">
    <property type="term" value="C:ribonucleoprotein complex"/>
    <property type="evidence" value="ECO:0007669"/>
    <property type="project" value="UniProtKB-KW"/>
</dbReference>
<dbReference type="GO" id="GO:0005840">
    <property type="term" value="C:ribosome"/>
    <property type="evidence" value="ECO:0007669"/>
    <property type="project" value="UniProtKB-KW"/>
</dbReference>
<dbReference type="GO" id="GO:0019843">
    <property type="term" value="F:rRNA binding"/>
    <property type="evidence" value="ECO:0007669"/>
    <property type="project" value="UniProtKB-UniRule"/>
</dbReference>
<dbReference type="GO" id="GO:0003735">
    <property type="term" value="F:structural constituent of ribosome"/>
    <property type="evidence" value="ECO:0007669"/>
    <property type="project" value="InterPro"/>
</dbReference>
<dbReference type="GO" id="GO:0006412">
    <property type="term" value="P:translation"/>
    <property type="evidence" value="ECO:0007669"/>
    <property type="project" value="UniProtKB-UniRule"/>
</dbReference>
<dbReference type="FunFam" id="3.40.1370.10:FF:000001">
    <property type="entry name" value="50S ribosomal protein L4"/>
    <property type="match status" value="1"/>
</dbReference>
<dbReference type="Gene3D" id="3.40.1370.10">
    <property type="match status" value="1"/>
</dbReference>
<dbReference type="HAMAP" id="MF_01328_B">
    <property type="entry name" value="Ribosomal_uL4_B"/>
    <property type="match status" value="1"/>
</dbReference>
<dbReference type="InterPro" id="IPR002136">
    <property type="entry name" value="Ribosomal_uL4"/>
</dbReference>
<dbReference type="InterPro" id="IPR013005">
    <property type="entry name" value="Ribosomal_uL4-like"/>
</dbReference>
<dbReference type="InterPro" id="IPR023574">
    <property type="entry name" value="Ribosomal_uL4_dom_sf"/>
</dbReference>
<dbReference type="NCBIfam" id="TIGR03953">
    <property type="entry name" value="rplD_bact"/>
    <property type="match status" value="1"/>
</dbReference>
<dbReference type="PANTHER" id="PTHR10746">
    <property type="entry name" value="50S RIBOSOMAL PROTEIN L4"/>
    <property type="match status" value="1"/>
</dbReference>
<dbReference type="PANTHER" id="PTHR10746:SF6">
    <property type="entry name" value="LARGE RIBOSOMAL SUBUNIT PROTEIN UL4M"/>
    <property type="match status" value="1"/>
</dbReference>
<dbReference type="Pfam" id="PF00573">
    <property type="entry name" value="Ribosomal_L4"/>
    <property type="match status" value="1"/>
</dbReference>
<dbReference type="SUPFAM" id="SSF52166">
    <property type="entry name" value="Ribosomal protein L4"/>
    <property type="match status" value="1"/>
</dbReference>
<reference key="1">
    <citation type="journal article" date="2009" name="Proc. Natl. Acad. Sci. U.S.A.">
        <title>Hamiltonella defensa, genome evolution of protective bacterial endosymbiont from pathogenic ancestors.</title>
        <authorList>
            <person name="Degnan P.H."/>
            <person name="Yu Y."/>
            <person name="Sisneros N."/>
            <person name="Wing R.A."/>
            <person name="Moran N.A."/>
        </authorList>
    </citation>
    <scope>NUCLEOTIDE SEQUENCE [LARGE SCALE GENOMIC DNA]</scope>
    <source>
        <strain>5AT</strain>
    </source>
</reference>
<comment type="function">
    <text evidence="1">One of the primary rRNA binding proteins, this protein initially binds near the 5'-end of the 23S rRNA. It is important during the early stages of 50S assembly. It makes multiple contacts with different domains of the 23S rRNA in the assembled 50S subunit and ribosome.</text>
</comment>
<comment type="function">
    <text evidence="1">Forms part of the polypeptide exit tunnel.</text>
</comment>
<comment type="subunit">
    <text evidence="1">Part of the 50S ribosomal subunit.</text>
</comment>
<comment type="similarity">
    <text evidence="1">Belongs to the universal ribosomal protein uL4 family.</text>
</comment>
<accession>C4K7B7</accession>
<evidence type="ECO:0000255" key="1">
    <source>
        <dbReference type="HAMAP-Rule" id="MF_01328"/>
    </source>
</evidence>
<evidence type="ECO:0000256" key="2">
    <source>
        <dbReference type="SAM" id="MobiDB-lite"/>
    </source>
</evidence>
<evidence type="ECO:0000305" key="3"/>
<gene>
    <name evidence="1" type="primary">rplD</name>
    <name type="ordered locus">HDEF_1865</name>
</gene>
<organism>
    <name type="scientific">Hamiltonella defensa subsp. Acyrthosiphon pisum (strain 5AT)</name>
    <dbReference type="NCBI Taxonomy" id="572265"/>
    <lineage>
        <taxon>Bacteria</taxon>
        <taxon>Pseudomonadati</taxon>
        <taxon>Pseudomonadota</taxon>
        <taxon>Gammaproteobacteria</taxon>
        <taxon>Enterobacterales</taxon>
        <taxon>Enterobacteriaceae</taxon>
        <taxon>aphid secondary symbionts</taxon>
        <taxon>Candidatus Hamiltonella</taxon>
    </lineage>
</organism>
<keyword id="KW-0687">Ribonucleoprotein</keyword>
<keyword id="KW-0689">Ribosomal protein</keyword>
<keyword id="KW-0694">RNA-binding</keyword>
<keyword id="KW-0699">rRNA-binding</keyword>
<name>RL4_HAMD5</name>
<protein>
    <recommendedName>
        <fullName evidence="1">Large ribosomal subunit protein uL4</fullName>
    </recommendedName>
    <alternativeName>
        <fullName evidence="3">50S ribosomal protein L4</fullName>
    </alternativeName>
</protein>
<sequence>MELVMKDAECALTVSETTFGRDFNEALVHQVVVAYAAGARQGTRAQKSRAEVKASRKKPWRQKGTGRARAGSVKSPIWRSGGITFAAKPQDHSQKVNKKMYQGALKSILSELVRQNRLIVVETFSVEKPKTKLLIQKLKEMSLRDVLIVTEEVDENLFLAARNLYKVDVRDAAGIDPVSLISFDKVVMTGNAVKQLEEMLA</sequence>
<proteinExistence type="inferred from homology"/>